<reference key="1">
    <citation type="submission" date="2007-08" db="EMBL/GenBank/DDBJ databases">
        <authorList>
            <consortium name="The Vibrio harveyi Genome Sequencing Project"/>
            <person name="Bassler B."/>
            <person name="Clifton S.W."/>
            <person name="Fulton L."/>
            <person name="Delehaunty K."/>
            <person name="Fronick C."/>
            <person name="Harrison M."/>
            <person name="Markivic C."/>
            <person name="Fulton R."/>
            <person name="Tin-Wollam A.-M."/>
            <person name="Shah N."/>
            <person name="Pepin K."/>
            <person name="Nash W."/>
            <person name="Thiruvilangam P."/>
            <person name="Bhonagiri V."/>
            <person name="Waters C."/>
            <person name="Tu K.C."/>
            <person name="Irgon J."/>
            <person name="Wilson R.K."/>
        </authorList>
    </citation>
    <scope>NUCLEOTIDE SEQUENCE [LARGE SCALE GENOMIC DNA]</scope>
    <source>
        <strain>ATCC BAA-1116 / BB120</strain>
    </source>
</reference>
<feature type="chain" id="PRO_0000313506" description="DNA ligase">
    <location>
        <begin position="1"/>
        <end position="670"/>
    </location>
</feature>
<feature type="domain" description="BRCT" evidence="1">
    <location>
        <begin position="593"/>
        <end position="670"/>
    </location>
</feature>
<feature type="active site" description="N6-AMP-lysine intermediate" evidence="1">
    <location>
        <position position="116"/>
    </location>
</feature>
<feature type="binding site" evidence="1">
    <location>
        <begin position="33"/>
        <end position="37"/>
    </location>
    <ligand>
        <name>NAD(+)</name>
        <dbReference type="ChEBI" id="CHEBI:57540"/>
    </ligand>
</feature>
<feature type="binding site" evidence="1">
    <location>
        <begin position="82"/>
        <end position="83"/>
    </location>
    <ligand>
        <name>NAD(+)</name>
        <dbReference type="ChEBI" id="CHEBI:57540"/>
    </ligand>
</feature>
<feature type="binding site" evidence="1">
    <location>
        <position position="114"/>
    </location>
    <ligand>
        <name>NAD(+)</name>
        <dbReference type="ChEBI" id="CHEBI:57540"/>
    </ligand>
</feature>
<feature type="binding site" evidence="1">
    <location>
        <position position="137"/>
    </location>
    <ligand>
        <name>NAD(+)</name>
        <dbReference type="ChEBI" id="CHEBI:57540"/>
    </ligand>
</feature>
<feature type="binding site" evidence="1">
    <location>
        <position position="174"/>
    </location>
    <ligand>
        <name>NAD(+)</name>
        <dbReference type="ChEBI" id="CHEBI:57540"/>
    </ligand>
</feature>
<feature type="binding site" evidence="1">
    <location>
        <position position="291"/>
    </location>
    <ligand>
        <name>NAD(+)</name>
        <dbReference type="ChEBI" id="CHEBI:57540"/>
    </ligand>
</feature>
<feature type="binding site" evidence="1">
    <location>
        <position position="315"/>
    </location>
    <ligand>
        <name>NAD(+)</name>
        <dbReference type="ChEBI" id="CHEBI:57540"/>
    </ligand>
</feature>
<feature type="binding site" evidence="1">
    <location>
        <position position="409"/>
    </location>
    <ligand>
        <name>Zn(2+)</name>
        <dbReference type="ChEBI" id="CHEBI:29105"/>
    </ligand>
</feature>
<feature type="binding site" evidence="1">
    <location>
        <position position="412"/>
    </location>
    <ligand>
        <name>Zn(2+)</name>
        <dbReference type="ChEBI" id="CHEBI:29105"/>
    </ligand>
</feature>
<feature type="binding site" evidence="1">
    <location>
        <position position="427"/>
    </location>
    <ligand>
        <name>Zn(2+)</name>
        <dbReference type="ChEBI" id="CHEBI:29105"/>
    </ligand>
</feature>
<feature type="binding site" evidence="1">
    <location>
        <position position="433"/>
    </location>
    <ligand>
        <name>Zn(2+)</name>
        <dbReference type="ChEBI" id="CHEBI:29105"/>
    </ligand>
</feature>
<comment type="function">
    <text evidence="1">DNA ligase that catalyzes the formation of phosphodiester linkages between 5'-phosphoryl and 3'-hydroxyl groups in double-stranded DNA using NAD as a coenzyme and as the energy source for the reaction. It is essential for DNA replication and repair of damaged DNA.</text>
</comment>
<comment type="catalytic activity">
    <reaction evidence="1">
        <text>NAD(+) + (deoxyribonucleotide)n-3'-hydroxyl + 5'-phospho-(deoxyribonucleotide)m = (deoxyribonucleotide)n+m + AMP + beta-nicotinamide D-nucleotide.</text>
        <dbReference type="EC" id="6.5.1.2"/>
    </reaction>
</comment>
<comment type="cofactor">
    <cofactor evidence="1">
        <name>Mg(2+)</name>
        <dbReference type="ChEBI" id="CHEBI:18420"/>
    </cofactor>
    <cofactor evidence="1">
        <name>Mn(2+)</name>
        <dbReference type="ChEBI" id="CHEBI:29035"/>
    </cofactor>
</comment>
<comment type="similarity">
    <text evidence="1">Belongs to the NAD-dependent DNA ligase family. LigA subfamily.</text>
</comment>
<accession>A7MT54</accession>
<sequence>MSESVLQRLEELKESLHYHAVRYYVEDNPEIPDAEYDRMMRELLDIEAEHPELVTVDSPSLRVGGQPLSEFSQVTHEVPMLSLDNAFDDAELDGFHKRAQDRVVGHTIKQYCCEPKLDGLAVSLLYENGVLVQAATRGDGTTGENITENVRTISAIPLKLQGKGWPTRLEVRGEVFMPKAGFDKLNENARKKGEKVFVNPRNAAAGSLRQLDSRITASRPLSFYAYSVGVVEGATLANSHYERFLQIKSWGLPMCPETKRVDSLEEVKAYYQDILTRREALAYEIDGVVIKVDDIAIQERLGFVARAPRWAIAYKFPAQEEITTLNEVEFQVGRTGAITPVAKLEPIFVGGVTVSNATLHNADEIERLQVMVGDQVVIRRAGDVIPQVVSVIKERRPETAREILFPDACPVCGSHVERIEGEAVTRCTGGLVCQAQRKEALKHFVSRKALDVDGLGDKVIEQLVDREMVETPADLFKLSAGVLTVLERMGPKSATNVVNALEKSKLTTLPRFLYSLGIREVGEATAANLAQYFKNLDAIQQATEEQLIEVQDIGVIVAKHITTFFGEEKNQAVVQDLLAQGINWPEIAAPQEGVELPLEGKTVVLTGTLSQLGRSEAKEALQNLGAKVTGSVSKKTDILFAGENAGSKLAKAQELGIEIQTEQDLLNLMK</sequence>
<name>DNLJ_VIBC1</name>
<gene>
    <name evidence="1" type="primary">ligA</name>
    <name type="ordered locus">VIBHAR_01312</name>
</gene>
<keyword id="KW-0227">DNA damage</keyword>
<keyword id="KW-0234">DNA repair</keyword>
<keyword id="KW-0235">DNA replication</keyword>
<keyword id="KW-0436">Ligase</keyword>
<keyword id="KW-0460">Magnesium</keyword>
<keyword id="KW-0464">Manganese</keyword>
<keyword id="KW-0479">Metal-binding</keyword>
<keyword id="KW-0520">NAD</keyword>
<keyword id="KW-0862">Zinc</keyword>
<protein>
    <recommendedName>
        <fullName evidence="1">DNA ligase</fullName>
        <ecNumber evidence="1">6.5.1.2</ecNumber>
    </recommendedName>
    <alternativeName>
        <fullName evidence="1">Polydeoxyribonucleotide synthase [NAD(+)]</fullName>
    </alternativeName>
</protein>
<dbReference type="EC" id="6.5.1.2" evidence="1"/>
<dbReference type="EMBL" id="CP000789">
    <property type="protein sequence ID" value="ABU70289.1"/>
    <property type="molecule type" value="Genomic_DNA"/>
</dbReference>
<dbReference type="RefSeq" id="WP_012127238.1">
    <property type="nucleotide sequence ID" value="NC_009783.1"/>
</dbReference>
<dbReference type="SMR" id="A7MT54"/>
<dbReference type="KEGG" id="vha:VIBHAR_01312"/>
<dbReference type="PATRIC" id="fig|338187.36.peg.1234"/>
<dbReference type="Proteomes" id="UP000008152">
    <property type="component" value="Chromosome I"/>
</dbReference>
<dbReference type="GO" id="GO:0005829">
    <property type="term" value="C:cytosol"/>
    <property type="evidence" value="ECO:0007669"/>
    <property type="project" value="TreeGrafter"/>
</dbReference>
<dbReference type="GO" id="GO:0003677">
    <property type="term" value="F:DNA binding"/>
    <property type="evidence" value="ECO:0007669"/>
    <property type="project" value="InterPro"/>
</dbReference>
<dbReference type="GO" id="GO:0003911">
    <property type="term" value="F:DNA ligase (NAD+) activity"/>
    <property type="evidence" value="ECO:0007669"/>
    <property type="project" value="UniProtKB-UniRule"/>
</dbReference>
<dbReference type="GO" id="GO:0046872">
    <property type="term" value="F:metal ion binding"/>
    <property type="evidence" value="ECO:0007669"/>
    <property type="project" value="UniProtKB-KW"/>
</dbReference>
<dbReference type="GO" id="GO:0006281">
    <property type="term" value="P:DNA repair"/>
    <property type="evidence" value="ECO:0007669"/>
    <property type="project" value="UniProtKB-KW"/>
</dbReference>
<dbReference type="GO" id="GO:0006260">
    <property type="term" value="P:DNA replication"/>
    <property type="evidence" value="ECO:0007669"/>
    <property type="project" value="UniProtKB-KW"/>
</dbReference>
<dbReference type="CDD" id="cd17748">
    <property type="entry name" value="BRCT_DNA_ligase_like"/>
    <property type="match status" value="1"/>
</dbReference>
<dbReference type="CDD" id="cd00114">
    <property type="entry name" value="LIGANc"/>
    <property type="match status" value="1"/>
</dbReference>
<dbReference type="FunFam" id="1.10.150.20:FF:000006">
    <property type="entry name" value="DNA ligase"/>
    <property type="match status" value="1"/>
</dbReference>
<dbReference type="FunFam" id="1.10.150.20:FF:000007">
    <property type="entry name" value="DNA ligase"/>
    <property type="match status" value="1"/>
</dbReference>
<dbReference type="FunFam" id="1.10.287.610:FF:000002">
    <property type="entry name" value="DNA ligase"/>
    <property type="match status" value="1"/>
</dbReference>
<dbReference type="FunFam" id="2.40.50.140:FF:000012">
    <property type="entry name" value="DNA ligase"/>
    <property type="match status" value="1"/>
</dbReference>
<dbReference type="FunFam" id="3.30.470.30:FF:000001">
    <property type="entry name" value="DNA ligase"/>
    <property type="match status" value="1"/>
</dbReference>
<dbReference type="FunFam" id="6.20.10.30:FF:000001">
    <property type="entry name" value="DNA ligase"/>
    <property type="match status" value="1"/>
</dbReference>
<dbReference type="Gene3D" id="6.20.10.30">
    <property type="match status" value="1"/>
</dbReference>
<dbReference type="Gene3D" id="1.10.150.20">
    <property type="entry name" value="5' to 3' exonuclease, C-terminal subdomain"/>
    <property type="match status" value="2"/>
</dbReference>
<dbReference type="Gene3D" id="3.40.50.10190">
    <property type="entry name" value="BRCT domain"/>
    <property type="match status" value="1"/>
</dbReference>
<dbReference type="Gene3D" id="3.30.470.30">
    <property type="entry name" value="DNA ligase/mRNA capping enzyme"/>
    <property type="match status" value="1"/>
</dbReference>
<dbReference type="Gene3D" id="1.10.287.610">
    <property type="entry name" value="Helix hairpin bin"/>
    <property type="match status" value="1"/>
</dbReference>
<dbReference type="Gene3D" id="2.40.50.140">
    <property type="entry name" value="Nucleic acid-binding proteins"/>
    <property type="match status" value="1"/>
</dbReference>
<dbReference type="HAMAP" id="MF_01588">
    <property type="entry name" value="DNA_ligase_A"/>
    <property type="match status" value="1"/>
</dbReference>
<dbReference type="InterPro" id="IPR001357">
    <property type="entry name" value="BRCT_dom"/>
</dbReference>
<dbReference type="InterPro" id="IPR036420">
    <property type="entry name" value="BRCT_dom_sf"/>
</dbReference>
<dbReference type="InterPro" id="IPR041663">
    <property type="entry name" value="DisA/LigA_HHH"/>
</dbReference>
<dbReference type="InterPro" id="IPR001679">
    <property type="entry name" value="DNA_ligase"/>
</dbReference>
<dbReference type="InterPro" id="IPR018239">
    <property type="entry name" value="DNA_ligase_AS"/>
</dbReference>
<dbReference type="InterPro" id="IPR033136">
    <property type="entry name" value="DNA_ligase_CS"/>
</dbReference>
<dbReference type="InterPro" id="IPR013839">
    <property type="entry name" value="DNAligase_adenylation"/>
</dbReference>
<dbReference type="InterPro" id="IPR013840">
    <property type="entry name" value="DNAligase_N"/>
</dbReference>
<dbReference type="InterPro" id="IPR003583">
    <property type="entry name" value="Hlx-hairpin-Hlx_DNA-bd_motif"/>
</dbReference>
<dbReference type="InterPro" id="IPR012340">
    <property type="entry name" value="NA-bd_OB-fold"/>
</dbReference>
<dbReference type="InterPro" id="IPR004150">
    <property type="entry name" value="NAD_DNA_ligase_OB"/>
</dbReference>
<dbReference type="InterPro" id="IPR010994">
    <property type="entry name" value="RuvA_2-like"/>
</dbReference>
<dbReference type="InterPro" id="IPR004149">
    <property type="entry name" value="Znf_DNAligase_C4"/>
</dbReference>
<dbReference type="NCBIfam" id="TIGR00575">
    <property type="entry name" value="dnlj"/>
    <property type="match status" value="1"/>
</dbReference>
<dbReference type="NCBIfam" id="NF005932">
    <property type="entry name" value="PRK07956.1"/>
    <property type="match status" value="1"/>
</dbReference>
<dbReference type="PANTHER" id="PTHR23389">
    <property type="entry name" value="CHROMOSOME TRANSMISSION FIDELITY FACTOR 18"/>
    <property type="match status" value="1"/>
</dbReference>
<dbReference type="PANTHER" id="PTHR23389:SF9">
    <property type="entry name" value="DNA LIGASE"/>
    <property type="match status" value="1"/>
</dbReference>
<dbReference type="Pfam" id="PF00533">
    <property type="entry name" value="BRCT"/>
    <property type="match status" value="1"/>
</dbReference>
<dbReference type="Pfam" id="PF01653">
    <property type="entry name" value="DNA_ligase_aden"/>
    <property type="match status" value="1"/>
</dbReference>
<dbReference type="Pfam" id="PF03120">
    <property type="entry name" value="DNA_ligase_OB"/>
    <property type="match status" value="1"/>
</dbReference>
<dbReference type="Pfam" id="PF03119">
    <property type="entry name" value="DNA_ligase_ZBD"/>
    <property type="match status" value="1"/>
</dbReference>
<dbReference type="Pfam" id="PF12826">
    <property type="entry name" value="HHH_2"/>
    <property type="match status" value="1"/>
</dbReference>
<dbReference type="Pfam" id="PF14520">
    <property type="entry name" value="HHH_5"/>
    <property type="match status" value="1"/>
</dbReference>
<dbReference type="Pfam" id="PF22745">
    <property type="entry name" value="Nlig-Ia"/>
    <property type="match status" value="1"/>
</dbReference>
<dbReference type="PIRSF" id="PIRSF001604">
    <property type="entry name" value="LigA"/>
    <property type="match status" value="1"/>
</dbReference>
<dbReference type="SMART" id="SM00292">
    <property type="entry name" value="BRCT"/>
    <property type="match status" value="1"/>
</dbReference>
<dbReference type="SMART" id="SM00278">
    <property type="entry name" value="HhH1"/>
    <property type="match status" value="3"/>
</dbReference>
<dbReference type="SMART" id="SM00532">
    <property type="entry name" value="LIGANc"/>
    <property type="match status" value="1"/>
</dbReference>
<dbReference type="SUPFAM" id="SSF52113">
    <property type="entry name" value="BRCT domain"/>
    <property type="match status" value="1"/>
</dbReference>
<dbReference type="SUPFAM" id="SSF56091">
    <property type="entry name" value="DNA ligase/mRNA capping enzyme, catalytic domain"/>
    <property type="match status" value="1"/>
</dbReference>
<dbReference type="SUPFAM" id="SSF50249">
    <property type="entry name" value="Nucleic acid-binding proteins"/>
    <property type="match status" value="1"/>
</dbReference>
<dbReference type="SUPFAM" id="SSF47781">
    <property type="entry name" value="RuvA domain 2-like"/>
    <property type="match status" value="1"/>
</dbReference>
<dbReference type="PROSITE" id="PS50172">
    <property type="entry name" value="BRCT"/>
    <property type="match status" value="1"/>
</dbReference>
<dbReference type="PROSITE" id="PS01055">
    <property type="entry name" value="DNA_LIGASE_N1"/>
    <property type="match status" value="1"/>
</dbReference>
<dbReference type="PROSITE" id="PS01056">
    <property type="entry name" value="DNA_LIGASE_N2"/>
    <property type="match status" value="1"/>
</dbReference>
<evidence type="ECO:0000255" key="1">
    <source>
        <dbReference type="HAMAP-Rule" id="MF_01588"/>
    </source>
</evidence>
<organism>
    <name type="scientific">Vibrio campbellii (strain ATCC BAA-1116)</name>
    <dbReference type="NCBI Taxonomy" id="2902295"/>
    <lineage>
        <taxon>Bacteria</taxon>
        <taxon>Pseudomonadati</taxon>
        <taxon>Pseudomonadota</taxon>
        <taxon>Gammaproteobacteria</taxon>
        <taxon>Vibrionales</taxon>
        <taxon>Vibrionaceae</taxon>
        <taxon>Vibrio</taxon>
    </lineage>
</organism>
<proteinExistence type="inferred from homology"/>